<name>SORT1_DANRE</name>
<feature type="signal peptide" evidence="3">
    <location>
        <begin position="1"/>
        <end position="18"/>
    </location>
</feature>
<feature type="chain" id="PRO_0000045159" description="Sortilin">
    <location>
        <begin position="19"/>
        <end position="814"/>
    </location>
</feature>
<feature type="topological domain" description="Extracellular" evidence="3">
    <location>
        <begin position="19"/>
        <end position="741"/>
    </location>
</feature>
<feature type="transmembrane region" description="Helical" evidence="3">
    <location>
        <begin position="742"/>
        <end position="762"/>
    </location>
</feature>
<feature type="topological domain" description="Cytoplasmic" evidence="3">
    <location>
        <begin position="763"/>
        <end position="814"/>
    </location>
</feature>
<feature type="repeat" description="BNR 1">
    <location>
        <begin position="129"/>
        <end position="140"/>
    </location>
</feature>
<feature type="repeat" description="BNR 2">
    <location>
        <begin position="181"/>
        <end position="192"/>
    </location>
</feature>
<feature type="repeat" description="BNR 3">
    <location>
        <begin position="223"/>
        <end position="234"/>
    </location>
</feature>
<feature type="repeat" description="BNR 4">
    <location>
        <begin position="269"/>
        <end position="280"/>
    </location>
</feature>
<feature type="repeat" description="BNR 5">
    <location>
        <begin position="310"/>
        <end position="321"/>
    </location>
</feature>
<feature type="repeat" description="BNR 6">
    <location>
        <begin position="359"/>
        <end position="370"/>
    </location>
</feature>
<feature type="repeat" description="BNR 7">
    <location>
        <begin position="410"/>
        <end position="421"/>
    </location>
</feature>
<feature type="repeat" description="BNR 8">
    <location>
        <begin position="488"/>
        <end position="499"/>
    </location>
</feature>
<feature type="repeat" description="BNR 9">
    <location>
        <begin position="531"/>
        <end position="542"/>
    </location>
</feature>
<feature type="short sequence motif" description="Endocytosis signal" evidence="3">
    <location>
        <begin position="771"/>
        <end position="776"/>
    </location>
</feature>
<feature type="lipid moiety-binding region" description="S-palmitoyl cysteine" evidence="2">
    <location>
        <position position="767"/>
    </location>
</feature>
<feature type="glycosylation site" description="N-linked (GlcNAc...) asparagine" evidence="3">
    <location>
        <position position="82"/>
    </location>
</feature>
<feature type="glycosylation site" description="N-linked (GlcNAc...) asparagine" evidence="3">
    <location>
        <position position="146"/>
    </location>
</feature>
<feature type="glycosylation site" description="N-linked (GlcNAc...) asparagine" evidence="3">
    <location>
        <position position="257"/>
    </location>
</feature>
<feature type="glycosylation site" description="N-linked (GlcNAc...) asparagine" evidence="3">
    <location>
        <position position="388"/>
    </location>
</feature>
<feature type="glycosylation site" description="N-linked (GlcNAc...) asparagine" evidence="3">
    <location>
        <position position="544"/>
    </location>
</feature>
<feature type="glycosylation site" description="N-linked (GlcNAc...) asparagine" evidence="3">
    <location>
        <position position="565"/>
    </location>
</feature>
<feature type="glycosylation site" description="N-linked (GlcNAc...) asparagine" evidence="3">
    <location>
        <position position="666"/>
    </location>
</feature>
<feature type="disulfide bond" evidence="1">
    <location>
        <begin position="70"/>
        <end position="539"/>
    </location>
</feature>
<feature type="disulfide bond" evidence="1">
    <location>
        <begin position="240"/>
        <end position="260"/>
    </location>
</feature>
<feature type="disulfide bond" evidence="1">
    <location>
        <begin position="430"/>
        <end position="440"/>
    </location>
</feature>
<feature type="disulfide bond" evidence="1">
    <location>
        <begin position="595"/>
        <end position="634"/>
    </location>
</feature>
<feature type="disulfide bond" evidence="1">
    <location>
        <begin position="617"/>
        <end position="649"/>
    </location>
</feature>
<feature type="disulfide bond" evidence="1">
    <location>
        <begin position="651"/>
        <end position="705"/>
    </location>
</feature>
<feature type="disulfide bond" evidence="1">
    <location>
        <begin position="684"/>
        <end position="722"/>
    </location>
</feature>
<dbReference type="EMBL" id="BC068433">
    <property type="protein sequence ID" value="AAH68433.1"/>
    <property type="molecule type" value="mRNA"/>
</dbReference>
<dbReference type="RefSeq" id="NP_998395.1">
    <property type="nucleotide sequence ID" value="NM_213230.1"/>
</dbReference>
<dbReference type="SMR" id="Q6NUT7"/>
<dbReference type="FunCoup" id="Q6NUT7">
    <property type="interactions" value="252"/>
</dbReference>
<dbReference type="STRING" id="7955.ENSDARP00000131691"/>
<dbReference type="GlyCosmos" id="Q6NUT7">
    <property type="glycosylation" value="7 sites, No reported glycans"/>
</dbReference>
<dbReference type="PaxDb" id="7955-ENSDARP00000121875"/>
<dbReference type="GeneID" id="406511"/>
<dbReference type="KEGG" id="dre:406511"/>
<dbReference type="AGR" id="ZFIN:ZDB-GENE-040426-2329"/>
<dbReference type="CTD" id="406511"/>
<dbReference type="ZFIN" id="ZDB-GENE-040426-2329">
    <property type="gene designation" value="sort1a"/>
</dbReference>
<dbReference type="eggNOG" id="KOG3511">
    <property type="taxonomic scope" value="Eukaryota"/>
</dbReference>
<dbReference type="InParanoid" id="Q6NUT7"/>
<dbReference type="OrthoDB" id="443634at2759"/>
<dbReference type="PhylomeDB" id="Q6NUT7"/>
<dbReference type="PRO" id="PR:Q6NUT7"/>
<dbReference type="Proteomes" id="UP000000437">
    <property type="component" value="Alternate scaffold 11"/>
</dbReference>
<dbReference type="Proteomes" id="UP000000437">
    <property type="component" value="Chromosome 11"/>
</dbReference>
<dbReference type="GO" id="GO:0005829">
    <property type="term" value="C:cytosol"/>
    <property type="evidence" value="ECO:0007669"/>
    <property type="project" value="GOC"/>
</dbReference>
<dbReference type="GO" id="GO:0005789">
    <property type="term" value="C:endoplasmic reticulum membrane"/>
    <property type="evidence" value="ECO:0007669"/>
    <property type="project" value="UniProtKB-SubCell"/>
</dbReference>
<dbReference type="GO" id="GO:0010008">
    <property type="term" value="C:endosome membrane"/>
    <property type="evidence" value="ECO:0007669"/>
    <property type="project" value="UniProtKB-SubCell"/>
</dbReference>
<dbReference type="GO" id="GO:0005794">
    <property type="term" value="C:Golgi apparatus"/>
    <property type="evidence" value="ECO:0000318"/>
    <property type="project" value="GO_Central"/>
</dbReference>
<dbReference type="GO" id="GO:0032580">
    <property type="term" value="C:Golgi cisterna membrane"/>
    <property type="evidence" value="ECO:0007669"/>
    <property type="project" value="UniProtKB-SubCell"/>
</dbReference>
<dbReference type="GO" id="GO:0005765">
    <property type="term" value="C:lysosomal membrane"/>
    <property type="evidence" value="ECO:0007669"/>
    <property type="project" value="UniProtKB-SubCell"/>
</dbReference>
<dbReference type="GO" id="GO:0016020">
    <property type="term" value="C:membrane"/>
    <property type="evidence" value="ECO:0000318"/>
    <property type="project" value="GO_Central"/>
</dbReference>
<dbReference type="GO" id="GO:0031965">
    <property type="term" value="C:nuclear membrane"/>
    <property type="evidence" value="ECO:0007669"/>
    <property type="project" value="UniProtKB-SubCell"/>
</dbReference>
<dbReference type="GO" id="GO:0005886">
    <property type="term" value="C:plasma membrane"/>
    <property type="evidence" value="ECO:0007669"/>
    <property type="project" value="UniProtKB-SubCell"/>
</dbReference>
<dbReference type="GO" id="GO:0006897">
    <property type="term" value="P:endocytosis"/>
    <property type="evidence" value="ECO:0000318"/>
    <property type="project" value="GO_Central"/>
</dbReference>
<dbReference type="GO" id="GO:0006895">
    <property type="term" value="P:Golgi to endosome transport"/>
    <property type="evidence" value="ECO:0000318"/>
    <property type="project" value="GO_Central"/>
</dbReference>
<dbReference type="GO" id="GO:0016050">
    <property type="term" value="P:vesicle organization"/>
    <property type="evidence" value="ECO:0000318"/>
    <property type="project" value="GO_Central"/>
</dbReference>
<dbReference type="CDD" id="cd15482">
    <property type="entry name" value="Sialidase_non-viral"/>
    <property type="match status" value="1"/>
</dbReference>
<dbReference type="FunFam" id="2.130.10.10:FF:000802">
    <property type="entry name" value="Sortilin"/>
    <property type="match status" value="1"/>
</dbReference>
<dbReference type="Gene3D" id="2.10.70.80">
    <property type="match status" value="1"/>
</dbReference>
<dbReference type="Gene3D" id="3.30.60.270">
    <property type="match status" value="1"/>
</dbReference>
<dbReference type="Gene3D" id="2.130.10.10">
    <property type="entry name" value="YVTN repeat-like/Quinoprotein amine dehydrogenase"/>
    <property type="match status" value="2"/>
</dbReference>
<dbReference type="InterPro" id="IPR031777">
    <property type="entry name" value="Sortilin_C"/>
</dbReference>
<dbReference type="InterPro" id="IPR031778">
    <property type="entry name" value="Sortilin_N"/>
</dbReference>
<dbReference type="InterPro" id="IPR006581">
    <property type="entry name" value="VPS10"/>
</dbReference>
<dbReference type="InterPro" id="IPR050310">
    <property type="entry name" value="VPS10-sortilin"/>
</dbReference>
<dbReference type="InterPro" id="IPR015943">
    <property type="entry name" value="WD40/YVTN_repeat-like_dom_sf"/>
</dbReference>
<dbReference type="PANTHER" id="PTHR12106:SF41">
    <property type="entry name" value="SORTILIN"/>
    <property type="match status" value="1"/>
</dbReference>
<dbReference type="PANTHER" id="PTHR12106">
    <property type="entry name" value="SORTILIN RELATED"/>
    <property type="match status" value="1"/>
</dbReference>
<dbReference type="Pfam" id="PF15902">
    <property type="entry name" value="Sortilin-Vps10"/>
    <property type="match status" value="1"/>
</dbReference>
<dbReference type="Pfam" id="PF15901">
    <property type="entry name" value="Sortilin_C"/>
    <property type="match status" value="1"/>
</dbReference>
<dbReference type="SMART" id="SM00602">
    <property type="entry name" value="VPS10"/>
    <property type="match status" value="1"/>
</dbReference>
<dbReference type="SUPFAM" id="SSF110296">
    <property type="entry name" value="Oligoxyloglucan reducing end-specific cellobiohydrolase"/>
    <property type="match status" value="2"/>
</dbReference>
<comment type="function">
    <text evidence="2">Functions as a sorting receptor in the Golgi compartment and as a clearance receptor on the cell surface. Required for protein transport from the Golgi apparatus to the lysosomes by a pathway that is independent of the mannose-6-phosphate receptor (M6PR). Lysosomal proteins bind specifically to the receptor in the Golgi apparatus and the resulting receptor-ligand complex is transported to an acidic prelysosomal compartment where the low pH mediates the dissociation of the complex. The receptor is then recycled back to the Golgi for another round of trafficking through its binding to the retromer. Also required for protein transport from the Golgi apparatus to the endosomes. May also mediate transport from the endoplasmic reticulum to the Golgi.</text>
</comment>
<comment type="subunit">
    <text evidence="2">Interacts with the cytosolic adapter proteins GGA1 and GGA2. Interacts with the heterotrimeric retromer cargo-selective complex (CSC), also described as vacuolar protein sorting subcomplex (VPS), formed by VPS26 (VPS26A or VPS26B), VPS29 and VPS35; which is involved in retrograde trafficking of the receptor from endosomes to the Golgi apparatus (By similarity).</text>
</comment>
<comment type="subcellular location">
    <subcellularLocation>
        <location evidence="2">Golgi apparatus</location>
        <location evidence="2">Golgi stack membrane</location>
        <topology evidence="2">Single-pass type I membrane protein</topology>
    </subcellularLocation>
    <subcellularLocation>
        <location evidence="2">Endosome membrane</location>
        <topology evidence="2">Single-pass type I membrane protein</topology>
    </subcellularLocation>
    <subcellularLocation>
        <location evidence="2">Endoplasmic reticulum membrane</location>
        <topology evidence="2">Single-pass type I membrane protein</topology>
    </subcellularLocation>
    <subcellularLocation>
        <location evidence="2">Nucleus membrane</location>
        <topology evidence="2">Single-pass type I membrane protein</topology>
    </subcellularLocation>
    <subcellularLocation>
        <location evidence="2">Cell membrane</location>
        <topology evidence="2">Single-pass type I membrane protein</topology>
        <orientation evidence="2">Extracellular side</orientation>
    </subcellularLocation>
    <subcellularLocation>
        <location evidence="2">Lysosome membrane</location>
        <topology evidence="2">Single-pass type I membrane protein</topology>
    </subcellularLocation>
</comment>
<comment type="PTM">
    <text evidence="2">Palmitoylated. Undergoes cysteine S-palmitoylation which promotes the partitioning of the receptor into an endosomal membrane subdomain where it can interact with the retromer cargo-selective complex which mediates its retrograde trafficking to the Golgi apparatus.</text>
</comment>
<comment type="similarity">
    <text evidence="4">Belongs to the VPS10-related sortilin family. SORT1 subfamily.</text>
</comment>
<reference key="1">
    <citation type="submission" date="2004-04" db="EMBL/GenBank/DDBJ databases">
        <authorList>
            <consortium name="NIH - Zebrafish Gene Collection (ZGC) project"/>
        </authorList>
    </citation>
    <scope>NUCLEOTIDE SEQUENCE [LARGE SCALE MRNA]</scope>
    <source>
        <tissue>Embryo</tissue>
    </source>
</reference>
<evidence type="ECO:0000250" key="1"/>
<evidence type="ECO:0000250" key="2">
    <source>
        <dbReference type="UniProtKB" id="Q99523"/>
    </source>
</evidence>
<evidence type="ECO:0000255" key="3"/>
<evidence type="ECO:0000305" key="4"/>
<gene>
    <name type="primary">sort1</name>
</gene>
<sequence length="814" mass="90980">MSTVLCCVLVLLISVALCMDFEERPSSSWRSEQTMFLKSHKSRNLLSLRDLQQPDHGKMKRSEESAQNQCESLHGYQSTLQNDTHTHNFNDLSGSVSLAWVGDGTGVLLVLTTFQVPLFIMRFGQSKLYRSEDYGKTFQDITDLINNTFIQTEFGIAIGPDNSGKVILTGDLAEGKVTKIFRSVDFGKSFVTSELPFHPLMQITYNPKDSNILMVYSINYDLWLSKDFGANWKKIHESVCLVKWGIDDTIFLTTNPNGSCSDRGTLELRKSLDYGKTFKTIGNRIYSFGLGGRFVFASIMTDSGSTRMIHVSVDQGETWDMAQLPTVGHEQFYSILAANNDMVFMHVDEPGDSGIGTIYISDDRGIVFSKSLERHLYTTTGGDTDFTNITSLRGVYITSVLAEDGSVQTVITFNQGGEWRPLMKPWNGVCDSTAKHPSECSLHIHASYSISMKLNVPMQPLSETNAVGLVLAHGSVGGAVSVLSPDVYVSDDGGYTWFQALKGPHHYAILDSGGLLVAVEHNPTHPISQIKFSTDEGQCWHAHNFTDDPIYFTGLASEPGARSMNVSLWGYRDTILNQYWVSVTVDFRQLLSRDCQENDYIQWLAHSSDINSPTDGCVLGYKERFLRLRRDSVCWNGRDYKVTKEPTTCPCTLTDFHDFGFYHEENSSVCVEQPDLIGHSLEFCLHGRKEQLQTSGYRKIPGDHCEEGITPERKEIDLSKKCVSNLLRTEQLTKEHSFNSAPIIAVVIIVLLISAVAGVIFIKKYVCGGRFLVHRYSVLQQHAEANGIDGLDDLDTLEGGKTHYHDDSDEDLLE</sequence>
<keyword id="KW-1003">Cell membrane</keyword>
<keyword id="KW-1015">Disulfide bond</keyword>
<keyword id="KW-0256">Endoplasmic reticulum</keyword>
<keyword id="KW-0967">Endosome</keyword>
<keyword id="KW-0325">Glycoprotein</keyword>
<keyword id="KW-0333">Golgi apparatus</keyword>
<keyword id="KW-0449">Lipoprotein</keyword>
<keyword id="KW-0458">Lysosome</keyword>
<keyword id="KW-0472">Membrane</keyword>
<keyword id="KW-0539">Nucleus</keyword>
<keyword id="KW-0564">Palmitate</keyword>
<keyword id="KW-0675">Receptor</keyword>
<keyword id="KW-1185">Reference proteome</keyword>
<keyword id="KW-0677">Repeat</keyword>
<keyword id="KW-0732">Signal</keyword>
<keyword id="KW-0812">Transmembrane</keyword>
<keyword id="KW-1133">Transmembrane helix</keyword>
<keyword id="KW-0813">Transport</keyword>
<protein>
    <recommendedName>
        <fullName>Sortilin</fullName>
    </recommendedName>
</protein>
<organism>
    <name type="scientific">Danio rerio</name>
    <name type="common">Zebrafish</name>
    <name type="synonym">Brachydanio rerio</name>
    <dbReference type="NCBI Taxonomy" id="7955"/>
    <lineage>
        <taxon>Eukaryota</taxon>
        <taxon>Metazoa</taxon>
        <taxon>Chordata</taxon>
        <taxon>Craniata</taxon>
        <taxon>Vertebrata</taxon>
        <taxon>Euteleostomi</taxon>
        <taxon>Actinopterygii</taxon>
        <taxon>Neopterygii</taxon>
        <taxon>Teleostei</taxon>
        <taxon>Ostariophysi</taxon>
        <taxon>Cypriniformes</taxon>
        <taxon>Danionidae</taxon>
        <taxon>Danioninae</taxon>
        <taxon>Danio</taxon>
    </lineage>
</organism>
<accession>Q6NUT7</accession>
<proteinExistence type="evidence at transcript level"/>